<feature type="chain" id="PRO_0000166431" description="Chalcone--flavanone isomerase">
    <location>
        <begin position="1"/>
        <end position="256"/>
    </location>
</feature>
<feature type="region of interest" description="Disordered" evidence="2">
    <location>
        <begin position="219"/>
        <end position="256"/>
    </location>
</feature>
<feature type="compositionally biased region" description="Basic and acidic residues" evidence="2">
    <location>
        <begin position="228"/>
        <end position="256"/>
    </location>
</feature>
<feature type="binding site" evidence="1">
    <location>
        <position position="51"/>
    </location>
    <ligand>
        <name>substrate</name>
    </ligand>
</feature>
<feature type="binding site" evidence="1">
    <location>
        <position position="116"/>
    </location>
    <ligand>
        <name>substrate</name>
    </ligand>
</feature>
<feature type="binding site" evidence="1">
    <location>
        <position position="193"/>
    </location>
    <ligand>
        <name>substrate</name>
    </ligand>
</feature>
<feature type="site" description="Important for catalytic activity" evidence="1">
    <location>
        <position position="109"/>
    </location>
</feature>
<proteinExistence type="evidence at transcript level"/>
<keyword id="KW-0284">Flavonoid biosynthesis</keyword>
<keyword id="KW-0413">Isomerase</keyword>
<comment type="function">
    <text evidence="3">Catalyzes the intramolecular cyclization of bicyclic chalcones into tricyclic (S)-flavanones. Responsible for the isomerization of 4,2',4',6'-tetrahydroxychalcone (also termed chalcone) into naringenin.</text>
</comment>
<comment type="catalytic activity">
    <reaction>
        <text>a chalcone = a flavanone.</text>
        <dbReference type="EC" id="5.5.1.6"/>
    </reaction>
</comment>
<comment type="pathway">
    <text>Secondary metabolite biosynthesis; flavonoid biosynthesis.</text>
</comment>
<comment type="tissue specificity">
    <text evidence="3 4">Nodules.</text>
</comment>
<comment type="developmental stage">
    <text evidence="3">Primarily expressed in the infected cells of the fixation zones in root nodules.</text>
</comment>
<comment type="miscellaneous">
    <text>Part of the biosynthetic pathway for all classes of flavonoids, a large class of secondary plant metabolites, many of which are brightly colored.</text>
</comment>
<comment type="similarity">
    <text evidence="5">Belongs to the chalcone isomerase family.</text>
</comment>
<name>CFI_ELAUM</name>
<evidence type="ECO:0000250" key="1"/>
<evidence type="ECO:0000256" key="2">
    <source>
        <dbReference type="SAM" id="MobiDB-lite"/>
    </source>
</evidence>
<evidence type="ECO:0000269" key="3">
    <source>
    </source>
</evidence>
<evidence type="ECO:0000269" key="4">
    <source ref="1"/>
</evidence>
<evidence type="ECO:0000305" key="5"/>
<gene>
    <name type="primary">CHI</name>
</gene>
<reference key="1">
    <citation type="journal article" date="2003" name="J. Plant Biol.">
        <title>A type-I chalcone isomerase mRNA is highly expressed in the root nodules of Elaeagnus umbellata.</title>
        <authorList>
            <person name="Kim H.-B."/>
            <person name="Oh C.J."/>
            <person name="Lee H."/>
            <person name="An C.-S."/>
        </authorList>
    </citation>
    <scope>NUCLEOTIDE SEQUENCE [MRNA]</scope>
    <scope>TISSUE SPECIFICITY</scope>
    <source>
        <tissue>Root nodule</tissue>
    </source>
</reference>
<reference key="2">
    <citation type="journal article" date="2007" name="Mol. Cells">
        <title>Expression of a functional type-I chalcone isomerase gene is localized to the infected cells of root nodules of Elaeagnus umbellata.</title>
        <authorList>
            <person name="Kim H.-B."/>
            <person name="Bae J.H."/>
            <person name="Lim J.D."/>
            <person name="Yu C.Y."/>
            <person name="An C.-S."/>
        </authorList>
    </citation>
    <scope>FUNCTION</scope>
    <scope>DEVELOPMENTAL STAGE</scope>
    <scope>TISSUE SPECIFICITY</scope>
</reference>
<reference key="3">
    <citation type="journal article" date="2013" name="Plant Physiol. Biochem.">
        <title>The flavonoid biosynthetic pathway in Arabidopsis: Structural and genetic diversity.</title>
        <authorList>
            <person name="Saito K."/>
            <person name="Yonekura-Sakakibara K."/>
            <person name="Nakabayashi R."/>
            <person name="Higashi Y."/>
            <person name="Yamazaki M."/>
            <person name="Tohge T."/>
            <person name="Fernie A.R."/>
        </authorList>
    </citation>
    <scope>REVIEW</scope>
    <scope>NOMENCLATURE</scope>
</reference>
<dbReference type="EC" id="5.5.1.6"/>
<dbReference type="EMBL" id="AF061808">
    <property type="protein sequence ID" value="AAC16013.1"/>
    <property type="molecule type" value="mRNA"/>
</dbReference>
<dbReference type="SMR" id="O65333"/>
<dbReference type="UniPathway" id="UPA00154"/>
<dbReference type="GO" id="GO:0045430">
    <property type="term" value="F:chalcone isomerase activity"/>
    <property type="evidence" value="ECO:0007669"/>
    <property type="project" value="UniProtKB-EC"/>
</dbReference>
<dbReference type="GO" id="GO:0009813">
    <property type="term" value="P:flavonoid biosynthetic process"/>
    <property type="evidence" value="ECO:0007669"/>
    <property type="project" value="UniProtKB-UniPathway"/>
</dbReference>
<dbReference type="Gene3D" id="1.10.890.20">
    <property type="match status" value="1"/>
</dbReference>
<dbReference type="Gene3D" id="3.50.70.10">
    <property type="match status" value="1"/>
</dbReference>
<dbReference type="InterPro" id="IPR044164">
    <property type="entry name" value="CFI"/>
</dbReference>
<dbReference type="InterPro" id="IPR016087">
    <property type="entry name" value="Chalcone_isomerase"/>
</dbReference>
<dbReference type="InterPro" id="IPR016088">
    <property type="entry name" value="Chalcone_isomerase_3-sand"/>
</dbReference>
<dbReference type="InterPro" id="IPR016089">
    <property type="entry name" value="Chalcone_isomerase_bundle_sf"/>
</dbReference>
<dbReference type="InterPro" id="IPR036298">
    <property type="entry name" value="Chalcone_isomerase_sf"/>
</dbReference>
<dbReference type="PANTHER" id="PTHR28039:SF8">
    <property type="entry name" value="CHALCONE--FLAVANONE ISOMERASE 1-RELATED"/>
    <property type="match status" value="1"/>
</dbReference>
<dbReference type="PANTHER" id="PTHR28039">
    <property type="entry name" value="CHALCONE--FLAVONONE ISOMERASE 1-RELATED"/>
    <property type="match status" value="1"/>
</dbReference>
<dbReference type="Pfam" id="PF02431">
    <property type="entry name" value="Chalcone"/>
    <property type="match status" value="1"/>
</dbReference>
<dbReference type="SUPFAM" id="SSF54626">
    <property type="entry name" value="Chalcone isomerase"/>
    <property type="match status" value="1"/>
</dbReference>
<protein>
    <recommendedName>
        <fullName>Chalcone--flavanone isomerase</fullName>
        <shortName>Chalcone isomerase</shortName>
        <ecNumber>5.5.1.6</ecNumber>
    </recommendedName>
</protein>
<organism>
    <name type="scientific">Elaeagnus umbellata</name>
    <name type="common">Autumn olive</name>
    <name type="synonym">Elaeagnus crispa</name>
    <dbReference type="NCBI Taxonomy" id="43233"/>
    <lineage>
        <taxon>Eukaryota</taxon>
        <taxon>Viridiplantae</taxon>
        <taxon>Streptophyta</taxon>
        <taxon>Embryophyta</taxon>
        <taxon>Tracheophyta</taxon>
        <taxon>Spermatophyta</taxon>
        <taxon>Magnoliopsida</taxon>
        <taxon>eudicotyledons</taxon>
        <taxon>Gunneridae</taxon>
        <taxon>Pentapetalae</taxon>
        <taxon>rosids</taxon>
        <taxon>fabids</taxon>
        <taxon>Rosales</taxon>
        <taxon>Elaeagnaceae</taxon>
        <taxon>Elaeagnus</taxon>
    </lineage>
</organism>
<accession>O65333</accession>
<sequence>MAPFTKSVTEVQVESVIFPPEVKPPGSSKTLFLGGAGVRGIEIQGKFIKFTAIGVYLEDNAVPSLAVKWKGKSAQELTESVEFFRDIVTGPMEKFTRVTTILPLTGQQYSEKVSENCVAAWKSLGIYSDAEAKAIEKFIEIFKDQTFPPAASNLFTQSPLGSLTMSFSKDGSIPEVGNAVLENKLLSEAVLESIIGKHGVSPEAKQNLATRLVQLLNENSTTDLNESENEKLNSNEVSKEEKPLQVEKSAFKEVEV</sequence>